<proteinExistence type="evidence at protein level"/>
<sequence>MQFKKQLLVIFFAYFLVVNESEAFFGTLFKLGSKLIPGVMKLFSKKKERSLMKRELKNLYDPYQRSVEMERLLKELPLY</sequence>
<accession>A0A1D3IXJ5</accession>
<organism>
    <name type="scientific">Tityus obscurus</name>
    <name type="common">Amazonian scorpion</name>
    <name type="synonym">Tityus cambridgei</name>
    <dbReference type="NCBI Taxonomy" id="1221240"/>
    <lineage>
        <taxon>Eukaryota</taxon>
        <taxon>Metazoa</taxon>
        <taxon>Ecdysozoa</taxon>
        <taxon>Arthropoda</taxon>
        <taxon>Chelicerata</taxon>
        <taxon>Arachnida</taxon>
        <taxon>Scorpiones</taxon>
        <taxon>Buthida</taxon>
        <taxon>Buthoidea</taxon>
        <taxon>Buthidae</taxon>
        <taxon>Tityus</taxon>
    </lineage>
</organism>
<dbReference type="EMBL" id="LT576030">
    <property type="protein sequence ID" value="SBQ16531.1"/>
    <property type="molecule type" value="mRNA"/>
</dbReference>
<dbReference type="SMR" id="A0A1D3IXJ5"/>
<dbReference type="GO" id="GO:0005576">
    <property type="term" value="C:extracellular region"/>
    <property type="evidence" value="ECO:0007669"/>
    <property type="project" value="UniProtKB-SubCell"/>
</dbReference>
<dbReference type="GO" id="GO:0016020">
    <property type="term" value="C:membrane"/>
    <property type="evidence" value="ECO:0007669"/>
    <property type="project" value="UniProtKB-KW"/>
</dbReference>
<dbReference type="GO" id="GO:0044218">
    <property type="term" value="C:other organism cell membrane"/>
    <property type="evidence" value="ECO:0007669"/>
    <property type="project" value="UniProtKB-KW"/>
</dbReference>
<dbReference type="GO" id="GO:0006935">
    <property type="term" value="P:chemotaxis"/>
    <property type="evidence" value="ECO:0007669"/>
    <property type="project" value="UniProtKB-KW"/>
</dbReference>
<dbReference type="GO" id="GO:0042742">
    <property type="term" value="P:defense response to bacterium"/>
    <property type="evidence" value="ECO:0007669"/>
    <property type="project" value="UniProtKB-KW"/>
</dbReference>
<dbReference type="GO" id="GO:0050832">
    <property type="term" value="P:defense response to fungus"/>
    <property type="evidence" value="ECO:0007669"/>
    <property type="project" value="UniProtKB-KW"/>
</dbReference>
<dbReference type="GO" id="GO:0045087">
    <property type="term" value="P:innate immune response"/>
    <property type="evidence" value="ECO:0007669"/>
    <property type="project" value="UniProtKB-KW"/>
</dbReference>
<dbReference type="GO" id="GO:0031640">
    <property type="term" value="P:killing of cells of another organism"/>
    <property type="evidence" value="ECO:0007669"/>
    <property type="project" value="UniProtKB-KW"/>
</dbReference>
<keyword id="KW-0044">Antibiotic</keyword>
<keyword id="KW-0929">Antimicrobial</keyword>
<keyword id="KW-0145">Chemotaxis</keyword>
<keyword id="KW-0165">Cleavage on pair of basic residues</keyword>
<keyword id="KW-0295">Fungicide</keyword>
<keyword id="KW-0391">Immunity</keyword>
<keyword id="KW-0399">Innate immunity</keyword>
<keyword id="KW-0472">Membrane</keyword>
<keyword id="KW-0964">Secreted</keyword>
<keyword id="KW-0732">Signal</keyword>
<keyword id="KW-1052">Target cell membrane</keyword>
<keyword id="KW-1053">Target membrane</keyword>
<reference evidence="7" key="1">
    <citation type="journal article" date="2016" name="Front. Microbiol.">
        <title>Activity of scorpion venom-derived antifungal peptides against planktonic cells of Candida spp. and Cryptococcus neoformans and Candida albicans biofilms.</title>
        <authorList>
            <person name="Guilhelmelli F."/>
            <person name="Vilela N."/>
            <person name="Smidt K.S."/>
            <person name="de Oliveira M.A."/>
            <person name="da Cunha Morales Alvares A."/>
            <person name="Rigonatto M.C."/>
            <person name="da Silva Costa P.H."/>
            <person name="Tavares A.H."/>
            <person name="de Freitas S.M."/>
            <person name="Nicola A.M."/>
            <person name="Franco O.L."/>
            <person name="Derengowski L.D."/>
            <person name="Schwartz E.F."/>
            <person name="Mortari M.R."/>
            <person name="Bocca A.L."/>
            <person name="Albuquerque P."/>
            <person name="Silva-Pereira I."/>
        </authorList>
    </citation>
    <scope>NUCLEOTIDE SEQUENCE [MRNA]</scope>
    <scope>SYNTHESIS OF 24-49</scope>
    <scope>MUTAGENESIS OF GLY-32; VAL-39 AND 46-LYS-LYS-47</scope>
    <source>
        <tissue>Venom gland</tissue>
    </source>
</reference>
<reference key="2">
    <citation type="journal article" date="2018" name="Toxins">
        <title>Antimicrobial and chemotactic activity of scorpion-derived peptide, ToAP2, against Mycobacterium massiliensis.</title>
        <authorList>
            <person name="Marques-Neto L.M."/>
            <person name="Trentini M.M."/>
            <person name="das Neves R.C."/>
            <person name="Resende D.P."/>
            <person name="Procopio V.O."/>
            <person name="da Costa A.C."/>
            <person name="Kipnis A."/>
            <person name="Mortari M.R."/>
            <person name="Schwartz E.F."/>
            <person name="Junqueira-Kipnis A.P."/>
        </authorList>
    </citation>
    <scope>FUNCTION</scope>
</reference>
<evidence type="ECO:0000255" key="1"/>
<evidence type="ECO:0000269" key="2">
    <source>
    </source>
</evidence>
<evidence type="ECO:0000269" key="3">
    <source>
    </source>
</evidence>
<evidence type="ECO:0000303" key="4">
    <source>
    </source>
</evidence>
<evidence type="ECO:0000305" key="5"/>
<evidence type="ECO:0000305" key="6">
    <source>
    </source>
</evidence>
<evidence type="ECO:0000312" key="7">
    <source>
        <dbReference type="EMBL" id="SBQ16531.1"/>
    </source>
</evidence>
<comment type="function">
    <text evidence="2 3 5">Antimicrobial peptide (PubMed:27917162, PubMed:29848960). Shows antibacterial activity against all M.massiliense bacterial strains tested (PubMed:29848960). Has antifungal activity against Candida spp. and two Cryptococcus neoformans strains with MICs values ranging from 6.25 to 200 uM (PubMed:27917162). Also shows an inhibitory activity on C.albicans biofilms at high concentrations (PubMed:27917162). Exhibits chemotactic activity for monocytes, neutrophils, and eosinophils (PubMed:29848960). Shows low cytotoxic activity and has weak hemolytic activity on human erythrocytes (PubMed:27917162, PubMed:29848960). In vivo, treatment of infected mice with M.massiliense reduces the bacterial load in the liver, lung, and spleen (PubMed:27917162, PubMed:29848960). May act by disrupting the integrity of the bacterial cell membrane (Probable).</text>
</comment>
<comment type="subcellular location">
    <subcellularLocation>
        <location evidence="6">Secreted</location>
    </subcellularLocation>
    <subcellularLocation>
        <location evidence="5">Target cell membrane</location>
    </subcellularLocation>
    <text evidence="6">Has an amphipathic alpha-helical conformation.</text>
</comment>
<comment type="tissue specificity">
    <text evidence="6">Expressed by the venom gland.</text>
</comment>
<comment type="similarity">
    <text evidence="5">Belongs to the non-disulfide-bridged peptide (NDBP) superfamily. Medium-length antimicrobial peptide (group 3) family.</text>
</comment>
<feature type="signal peptide" evidence="1">
    <location>
        <begin position="1"/>
        <end position="23"/>
    </location>
</feature>
<feature type="peptide" id="PRO_5008915665" description="Antimicrobial peptide ToAP2" evidence="6">
    <location>
        <begin position="24"/>
        <end position="49"/>
    </location>
</feature>
<feature type="propeptide" id="PRO_0000454901" evidence="6">
    <location>
        <begin position="50"/>
        <end position="79"/>
    </location>
</feature>
<feature type="mutagenesis site" description="In ToAP2S1; loss of antifungal activity and increase in hemolytic activity against human erythrocytes; when associated with L-39 and 46-L-L-47." evidence="2">
    <original>G</original>
    <variation>L</variation>
    <location>
        <position position="32"/>
    </location>
</feature>
<feature type="mutagenesis site" description="In ToAP2S1; loss of antifungal activity and increase in hemolytic activity against human erythrocytes; when associated with L-32 and 46-L-L-47." evidence="2">
    <original>V</original>
    <variation>L</variation>
    <location>
        <position position="39"/>
    </location>
</feature>
<feature type="mutagenesis site" description="In ToAP2S1; loss of antifungal activity and increase in hemolytic activity against human erythrocytes; when associated with L-32 and L-39." evidence="2">
    <original>KK</original>
    <variation>LL</variation>
    <location>
        <begin position="46"/>
        <end position="47"/>
    </location>
</feature>
<protein>
    <recommendedName>
        <fullName evidence="4">Antimicrobial peptide ToAP2</fullName>
    </recommendedName>
</protein>
<name>NDB32_TITOB</name>